<comment type="function">
    <text>Possibly a non-classical excisionase.</text>
</comment>
<comment type="similarity">
    <text evidence="2">To the xis proteins of bacteriophages and of plasmid pSAM2 from S.ambofaciens.</text>
</comment>
<keyword id="KW-0238">DNA-binding</keyword>
<keyword id="KW-0614">Plasmid</keyword>
<geneLocation type="plasmid">
    <name>pSE211</name>
</geneLocation>
<proteinExistence type="predicted"/>
<protein>
    <recommendedName>
        <fullName>Probable excisionase</fullName>
    </recommendedName>
</protein>
<sequence>MTTNVTQLAATLASLAALLAEQQPAPEPEPEPAARRLPNRVLLTVEEAAKQLGLGRTKTYALVASGEIESVRIGRLRRIPRTAIDDYAARLIAQQSAA</sequence>
<reference key="1">
    <citation type="journal article" date="1990" name="J. Bacteriol.">
        <title>Characterization of the genetic elements required for site-specific integration of plasmid pSE211 in Saccharopolyspora erythraea.</title>
        <authorList>
            <person name="Brown D.P."/>
            <person name="Idler K.B."/>
            <person name="Katz L."/>
        </authorList>
    </citation>
    <scope>NUCLEOTIDE SEQUENCE [GENOMIC DNA]</scope>
    <source>
        <strain>ER720</strain>
    </source>
</reference>
<gene>
    <name type="primary">xis</name>
</gene>
<accession>P22876</accession>
<organism>
    <name type="scientific">Saccharopolyspora erythraea</name>
    <name type="common">Streptomyces erythraeus</name>
    <dbReference type="NCBI Taxonomy" id="1836"/>
    <lineage>
        <taxon>Bacteria</taxon>
        <taxon>Bacillati</taxon>
        <taxon>Actinomycetota</taxon>
        <taxon>Actinomycetes</taxon>
        <taxon>Pseudonocardiales</taxon>
        <taxon>Pseudonocardiaceae</taxon>
        <taxon>Saccharopolyspora</taxon>
    </lineage>
</organism>
<name>XIS_SACER</name>
<evidence type="ECO:0000250" key="1"/>
<evidence type="ECO:0000305" key="2"/>
<dbReference type="EMBL" id="M35138">
    <property type="protein sequence ID" value="AAA98344.1"/>
    <property type="molecule type" value="Genomic_DNA"/>
</dbReference>
<dbReference type="PIR" id="B35147">
    <property type="entry name" value="B35147"/>
</dbReference>
<dbReference type="RefSeq" id="WP_009946134.1">
    <property type="nucleotide sequence ID" value="NZ_JABNNH010000002.1"/>
</dbReference>
<dbReference type="GO" id="GO:0003677">
    <property type="term" value="F:DNA binding"/>
    <property type="evidence" value="ECO:0007669"/>
    <property type="project" value="UniProtKB-KW"/>
</dbReference>
<dbReference type="InterPro" id="IPR041657">
    <property type="entry name" value="HTH_17"/>
</dbReference>
<dbReference type="InterPro" id="IPR010093">
    <property type="entry name" value="SinI_DNA-bd"/>
</dbReference>
<dbReference type="NCBIfam" id="TIGR01764">
    <property type="entry name" value="excise"/>
    <property type="match status" value="1"/>
</dbReference>
<dbReference type="Pfam" id="PF12728">
    <property type="entry name" value="HTH_17"/>
    <property type="match status" value="1"/>
</dbReference>
<feature type="chain" id="PRO_0000066012" description="Probable excisionase">
    <location>
        <begin position="1"/>
        <end position="98"/>
    </location>
</feature>
<feature type="DNA-binding region" description="H-T-H motif" evidence="1">
    <location>
        <begin position="42"/>
        <end position="63"/>
    </location>
</feature>